<name>GLMS_SHOC1</name>
<protein>
    <recommendedName>
        <fullName evidence="1">Glutamine--fructose-6-phosphate aminotransferase [isomerizing]</fullName>
        <ecNumber evidence="1">2.6.1.16</ecNumber>
    </recommendedName>
    <alternativeName>
        <fullName evidence="1">D-fructose-6-phosphate amidotransferase</fullName>
    </alternativeName>
    <alternativeName>
        <fullName evidence="1">GFAT</fullName>
    </alternativeName>
    <alternativeName>
        <fullName evidence="1">Glucosamine-6-phosphate synthase</fullName>
    </alternativeName>
    <alternativeName>
        <fullName evidence="1">Hexosephosphate aminotransferase</fullName>
    </alternativeName>
    <alternativeName>
        <fullName evidence="1">L-glutamine--D-fructose-6-phosphate amidotransferase</fullName>
    </alternativeName>
</protein>
<sequence length="600" mass="65587">MCGIVGYIGNEDAKEILLSGLEKLEYRGYDSAGIAVRTESDTEVFKEKGRIATLRKAVDENVHSTVGIGHTRWATHGVPSQLNAHPHQSATERYTLVHNGVIENYEQIKRDYLADVQLKSDTDTEVIVQFIEQLAGEGLTTEEAVSKALSLMKGSYAIALLDKDDPDTIFVGKNKSPLLVGVGENANVVASDAMAMLTVTDQFIEIMDEELVIVRRDRIEIKTLAGDVQERKPYTAELDVSDIEKGTYAHFMLKEIDEQPFVIRNIIQKYQHEDGSTRLDEDIRAAMKDSDRIYIVAAGTSYHAGLVGKQLLERVSGKPTEVHIASEFLYNMPLLSEKPLFVFISQSGETADSRGVLVNVKKQGHRTLTITNVPGSTLSREADYTLHTFAGPEIAVASTKAYTAQIAVLALLAVDVANAAGKTLDFDLLQELAIAANAMESLCNQKDEMEQIARDYLSVTRNAFFIGRTADYFVALEGALKLKEISYIQAEGFAGGELKHGTIALIEDGTPVIALATQEHVNLSIRGNVQEVASRGAATAIISMEGLDQEGDAVVLPRVHELLTPLVSVIPTQLIAYYAALHRGCDVDKPRNLAKSVTVE</sequence>
<keyword id="KW-0032">Aminotransferase</keyword>
<keyword id="KW-0963">Cytoplasm</keyword>
<keyword id="KW-0315">Glutamine amidotransferase</keyword>
<keyword id="KW-1185">Reference proteome</keyword>
<keyword id="KW-0677">Repeat</keyword>
<keyword id="KW-0808">Transferase</keyword>
<organism>
    <name type="scientific">Shouchella clausii (strain KSM-K16)</name>
    <name type="common">Alkalihalobacillus clausii</name>
    <dbReference type="NCBI Taxonomy" id="66692"/>
    <lineage>
        <taxon>Bacteria</taxon>
        <taxon>Bacillati</taxon>
        <taxon>Bacillota</taxon>
        <taxon>Bacilli</taxon>
        <taxon>Bacillales</taxon>
        <taxon>Bacillaceae</taxon>
        <taxon>Shouchella</taxon>
    </lineage>
</organism>
<comment type="function">
    <text evidence="1">Catalyzes the first step in hexosamine metabolism, converting fructose-6P into glucosamine-6P using glutamine as a nitrogen source.</text>
</comment>
<comment type="catalytic activity">
    <reaction evidence="1">
        <text>D-fructose 6-phosphate + L-glutamine = D-glucosamine 6-phosphate + L-glutamate</text>
        <dbReference type="Rhea" id="RHEA:13237"/>
        <dbReference type="ChEBI" id="CHEBI:29985"/>
        <dbReference type="ChEBI" id="CHEBI:58359"/>
        <dbReference type="ChEBI" id="CHEBI:58725"/>
        <dbReference type="ChEBI" id="CHEBI:61527"/>
        <dbReference type="EC" id="2.6.1.16"/>
    </reaction>
</comment>
<comment type="subunit">
    <text evidence="1">Homodimer.</text>
</comment>
<comment type="subcellular location">
    <subcellularLocation>
        <location evidence="1">Cytoplasm</location>
    </subcellularLocation>
</comment>
<reference key="1">
    <citation type="submission" date="2003-10" db="EMBL/GenBank/DDBJ databases">
        <title>The complete genome sequence of the alkaliphilic Bacillus clausii KSM-K16.</title>
        <authorList>
            <person name="Takaki Y."/>
            <person name="Kageyama Y."/>
            <person name="Shimamura S."/>
            <person name="Suzuki H."/>
            <person name="Nishi S."/>
            <person name="Hatada Y."/>
            <person name="Kawai S."/>
            <person name="Ito S."/>
            <person name="Horikoshi K."/>
        </authorList>
    </citation>
    <scope>NUCLEOTIDE SEQUENCE [LARGE SCALE GENOMIC DNA]</scope>
    <source>
        <strain>KSM-K16</strain>
    </source>
</reference>
<feature type="initiator methionine" description="Removed" evidence="1">
    <location>
        <position position="1"/>
    </location>
</feature>
<feature type="chain" id="PRO_0000135299" description="Glutamine--fructose-6-phosphate aminotransferase [isomerizing]">
    <location>
        <begin position="2"/>
        <end position="600"/>
    </location>
</feature>
<feature type="domain" description="Glutamine amidotransferase type-2" evidence="1">
    <location>
        <begin position="2"/>
        <end position="217"/>
    </location>
</feature>
<feature type="domain" description="SIS 1" evidence="1">
    <location>
        <begin position="283"/>
        <end position="422"/>
    </location>
</feature>
<feature type="domain" description="SIS 2" evidence="1">
    <location>
        <begin position="452"/>
        <end position="590"/>
    </location>
</feature>
<feature type="active site" description="Nucleophile; for GATase activity" evidence="1">
    <location>
        <position position="2"/>
    </location>
</feature>
<feature type="active site" description="For Fru-6P isomerization activity" evidence="1">
    <location>
        <position position="595"/>
    </location>
</feature>
<evidence type="ECO:0000255" key="1">
    <source>
        <dbReference type="HAMAP-Rule" id="MF_00164"/>
    </source>
</evidence>
<dbReference type="EC" id="2.6.1.16" evidence="1"/>
<dbReference type="EMBL" id="AP006627">
    <property type="protein sequence ID" value="BAD62788.1"/>
    <property type="molecule type" value="Genomic_DNA"/>
</dbReference>
<dbReference type="RefSeq" id="WP_011245108.1">
    <property type="nucleotide sequence ID" value="NC_006582.1"/>
</dbReference>
<dbReference type="SMR" id="Q5WLG7"/>
<dbReference type="STRING" id="66692.ABC0245"/>
<dbReference type="KEGG" id="bcl:ABC0245"/>
<dbReference type="eggNOG" id="COG0449">
    <property type="taxonomic scope" value="Bacteria"/>
</dbReference>
<dbReference type="HOGENOM" id="CLU_012520_7_1_9"/>
<dbReference type="OrthoDB" id="106547at2"/>
<dbReference type="Proteomes" id="UP000001168">
    <property type="component" value="Chromosome"/>
</dbReference>
<dbReference type="GO" id="GO:0005829">
    <property type="term" value="C:cytosol"/>
    <property type="evidence" value="ECO:0007669"/>
    <property type="project" value="TreeGrafter"/>
</dbReference>
<dbReference type="GO" id="GO:0097367">
    <property type="term" value="F:carbohydrate derivative binding"/>
    <property type="evidence" value="ECO:0007669"/>
    <property type="project" value="InterPro"/>
</dbReference>
<dbReference type="GO" id="GO:0004360">
    <property type="term" value="F:glutamine-fructose-6-phosphate transaminase (isomerizing) activity"/>
    <property type="evidence" value="ECO:0007669"/>
    <property type="project" value="UniProtKB-UniRule"/>
</dbReference>
<dbReference type="GO" id="GO:0005975">
    <property type="term" value="P:carbohydrate metabolic process"/>
    <property type="evidence" value="ECO:0007669"/>
    <property type="project" value="UniProtKB-UniRule"/>
</dbReference>
<dbReference type="GO" id="GO:0006002">
    <property type="term" value="P:fructose 6-phosphate metabolic process"/>
    <property type="evidence" value="ECO:0007669"/>
    <property type="project" value="TreeGrafter"/>
</dbReference>
<dbReference type="GO" id="GO:0006487">
    <property type="term" value="P:protein N-linked glycosylation"/>
    <property type="evidence" value="ECO:0007669"/>
    <property type="project" value="TreeGrafter"/>
</dbReference>
<dbReference type="GO" id="GO:0006047">
    <property type="term" value="P:UDP-N-acetylglucosamine metabolic process"/>
    <property type="evidence" value="ECO:0007669"/>
    <property type="project" value="TreeGrafter"/>
</dbReference>
<dbReference type="CDD" id="cd00714">
    <property type="entry name" value="GFAT"/>
    <property type="match status" value="1"/>
</dbReference>
<dbReference type="CDD" id="cd05008">
    <property type="entry name" value="SIS_GlmS_GlmD_1"/>
    <property type="match status" value="1"/>
</dbReference>
<dbReference type="CDD" id="cd05009">
    <property type="entry name" value="SIS_GlmS_GlmD_2"/>
    <property type="match status" value="1"/>
</dbReference>
<dbReference type="FunFam" id="3.40.50.10490:FF:000022">
    <property type="entry name" value="Glutamine--fructose-6-phosphate aminotransferase [isomerizing]"/>
    <property type="match status" value="1"/>
</dbReference>
<dbReference type="FunFam" id="3.60.20.10:FF:000006">
    <property type="entry name" value="Glutamine--fructose-6-phosphate aminotransferase [isomerizing]"/>
    <property type="match status" value="1"/>
</dbReference>
<dbReference type="Gene3D" id="3.40.50.10490">
    <property type="entry name" value="Glucose-6-phosphate isomerase like protein, domain 1"/>
    <property type="match status" value="2"/>
</dbReference>
<dbReference type="Gene3D" id="3.60.20.10">
    <property type="entry name" value="Glutamine Phosphoribosylpyrophosphate, subunit 1, domain 1"/>
    <property type="match status" value="1"/>
</dbReference>
<dbReference type="HAMAP" id="MF_00164">
    <property type="entry name" value="GlmS"/>
    <property type="match status" value="1"/>
</dbReference>
<dbReference type="InterPro" id="IPR017932">
    <property type="entry name" value="GATase_2_dom"/>
</dbReference>
<dbReference type="InterPro" id="IPR005855">
    <property type="entry name" value="GFAT"/>
</dbReference>
<dbReference type="InterPro" id="IPR047084">
    <property type="entry name" value="GFAT_N"/>
</dbReference>
<dbReference type="InterPro" id="IPR035466">
    <property type="entry name" value="GlmS/AgaS_SIS"/>
</dbReference>
<dbReference type="InterPro" id="IPR035490">
    <property type="entry name" value="GlmS/FrlB_SIS"/>
</dbReference>
<dbReference type="InterPro" id="IPR029055">
    <property type="entry name" value="Ntn_hydrolases_N"/>
</dbReference>
<dbReference type="InterPro" id="IPR001347">
    <property type="entry name" value="SIS_dom"/>
</dbReference>
<dbReference type="InterPro" id="IPR046348">
    <property type="entry name" value="SIS_dom_sf"/>
</dbReference>
<dbReference type="NCBIfam" id="TIGR01135">
    <property type="entry name" value="glmS"/>
    <property type="match status" value="1"/>
</dbReference>
<dbReference type="NCBIfam" id="NF001484">
    <property type="entry name" value="PRK00331.1"/>
    <property type="match status" value="1"/>
</dbReference>
<dbReference type="PANTHER" id="PTHR10937">
    <property type="entry name" value="GLUCOSAMINE--FRUCTOSE-6-PHOSPHATE AMINOTRANSFERASE, ISOMERIZING"/>
    <property type="match status" value="1"/>
</dbReference>
<dbReference type="PANTHER" id="PTHR10937:SF0">
    <property type="entry name" value="GLUTAMINE--FRUCTOSE-6-PHOSPHATE TRANSAMINASE (ISOMERIZING)"/>
    <property type="match status" value="1"/>
</dbReference>
<dbReference type="Pfam" id="PF13522">
    <property type="entry name" value="GATase_6"/>
    <property type="match status" value="1"/>
</dbReference>
<dbReference type="Pfam" id="PF01380">
    <property type="entry name" value="SIS"/>
    <property type="match status" value="2"/>
</dbReference>
<dbReference type="SUPFAM" id="SSF56235">
    <property type="entry name" value="N-terminal nucleophile aminohydrolases (Ntn hydrolases)"/>
    <property type="match status" value="1"/>
</dbReference>
<dbReference type="SUPFAM" id="SSF53697">
    <property type="entry name" value="SIS domain"/>
    <property type="match status" value="1"/>
</dbReference>
<dbReference type="PROSITE" id="PS51278">
    <property type="entry name" value="GATASE_TYPE_2"/>
    <property type="match status" value="1"/>
</dbReference>
<dbReference type="PROSITE" id="PS51464">
    <property type="entry name" value="SIS"/>
    <property type="match status" value="2"/>
</dbReference>
<proteinExistence type="inferred from homology"/>
<gene>
    <name evidence="1" type="primary">glmS</name>
    <name type="ordered locus">ABC0245</name>
</gene>
<accession>Q5WLG7</accession>